<reference key="1">
    <citation type="journal article" date="2008" name="PLoS Genet.">
        <title>The genome of Borrelia recurrentis, the agent of deadly louse-borne relapsing fever, is a degraded subset of tick-borne Borrelia duttonii.</title>
        <authorList>
            <person name="Lescot M."/>
            <person name="Audic S."/>
            <person name="Robert C."/>
            <person name="Nguyen T.T."/>
            <person name="Blanc G."/>
            <person name="Cutler S.J."/>
            <person name="Wincker P."/>
            <person name="Couloux A."/>
            <person name="Claverie J.-M."/>
            <person name="Raoult D."/>
            <person name="Drancourt M."/>
        </authorList>
    </citation>
    <scope>NUCLEOTIDE SEQUENCE [LARGE SCALE GENOMIC DNA]</scope>
    <source>
        <strain>A1</strain>
    </source>
</reference>
<accession>B5RRH9</accession>
<organism>
    <name type="scientific">Borrelia recurrentis (strain A1)</name>
    <dbReference type="NCBI Taxonomy" id="412418"/>
    <lineage>
        <taxon>Bacteria</taxon>
        <taxon>Pseudomonadati</taxon>
        <taxon>Spirochaetota</taxon>
        <taxon>Spirochaetia</taxon>
        <taxon>Spirochaetales</taxon>
        <taxon>Borreliaceae</taxon>
        <taxon>Borrelia</taxon>
    </lineage>
</organism>
<gene>
    <name evidence="1" type="primary">tyrS</name>
    <name type="ordered locus">BRE_369</name>
</gene>
<feature type="chain" id="PRO_1000189264" description="Tyrosine--tRNA ligase">
    <location>
        <begin position="1"/>
        <end position="406"/>
    </location>
</feature>
<feature type="domain" description="S4 RNA-binding" evidence="1">
    <location>
        <begin position="341"/>
        <end position="405"/>
    </location>
</feature>
<feature type="short sequence motif" description="'HIGH' region">
    <location>
        <begin position="40"/>
        <end position="49"/>
    </location>
</feature>
<feature type="short sequence motif" description="'KMSKS' region">
    <location>
        <begin position="227"/>
        <end position="231"/>
    </location>
</feature>
<feature type="binding site" evidence="1">
    <location>
        <position position="35"/>
    </location>
    <ligand>
        <name>L-tyrosine</name>
        <dbReference type="ChEBI" id="CHEBI:58315"/>
    </ligand>
</feature>
<feature type="binding site" evidence="1">
    <location>
        <position position="167"/>
    </location>
    <ligand>
        <name>L-tyrosine</name>
        <dbReference type="ChEBI" id="CHEBI:58315"/>
    </ligand>
</feature>
<feature type="binding site" evidence="1">
    <location>
        <position position="171"/>
    </location>
    <ligand>
        <name>L-tyrosine</name>
        <dbReference type="ChEBI" id="CHEBI:58315"/>
    </ligand>
</feature>
<feature type="binding site" evidence="1">
    <location>
        <position position="230"/>
    </location>
    <ligand>
        <name>ATP</name>
        <dbReference type="ChEBI" id="CHEBI:30616"/>
    </ligand>
</feature>
<evidence type="ECO:0000255" key="1">
    <source>
        <dbReference type="HAMAP-Rule" id="MF_02006"/>
    </source>
</evidence>
<keyword id="KW-0030">Aminoacyl-tRNA synthetase</keyword>
<keyword id="KW-0067">ATP-binding</keyword>
<keyword id="KW-0963">Cytoplasm</keyword>
<keyword id="KW-0436">Ligase</keyword>
<keyword id="KW-0547">Nucleotide-binding</keyword>
<keyword id="KW-0648">Protein biosynthesis</keyword>
<keyword id="KW-0694">RNA-binding</keyword>
<sequence length="406" mass="45982">MNLSLKVLDKRGFLKQCTNLEELSTLMDREKIVFYVGVDATSASLHIGHLIPFMVMLHLQRQGHIPIILIGGGTTKIGDPSGKDSMRKILLKEDIDENVKTISSQLLKIIDLSNGGYILNNAEWLDGINYIEFLREVGIYFSVNRMLSFETYKRRLKDGLSFIEFNYQLLQSYDFYMLSRMKNCKLQIGGDDQWGNIVSGVDLVNRKSGNKVFGLTLPLITRSDGNKMGKSEKGAVYLDSELYSVYDFYQYFRNIPDLDVKKFLYLFTFLEEEEIERIASVKGQLLNNAKEILAFEITKIVHGKDEALKASSAAKAAFKGGDGRADIPFFKLELTNLEESILLVDLMVLAKVVSSKSEARRLIDSGGVYIDKVRVGDQNYCLCKDNFINGEIELKIGKKKILRIVL</sequence>
<proteinExistence type="inferred from homology"/>
<name>SYY_BORRA</name>
<dbReference type="EC" id="6.1.1.1" evidence="1"/>
<dbReference type="EMBL" id="CP000993">
    <property type="protein sequence ID" value="ACH94613.1"/>
    <property type="molecule type" value="Genomic_DNA"/>
</dbReference>
<dbReference type="RefSeq" id="WP_012538853.1">
    <property type="nucleotide sequence ID" value="NC_011244.1"/>
</dbReference>
<dbReference type="SMR" id="B5RRH9"/>
<dbReference type="KEGG" id="bre:BRE_369"/>
<dbReference type="HOGENOM" id="CLU_024003_0_3_12"/>
<dbReference type="Proteomes" id="UP000000612">
    <property type="component" value="Chromosome"/>
</dbReference>
<dbReference type="GO" id="GO:0005829">
    <property type="term" value="C:cytosol"/>
    <property type="evidence" value="ECO:0007669"/>
    <property type="project" value="TreeGrafter"/>
</dbReference>
<dbReference type="GO" id="GO:0005524">
    <property type="term" value="F:ATP binding"/>
    <property type="evidence" value="ECO:0007669"/>
    <property type="project" value="UniProtKB-UniRule"/>
</dbReference>
<dbReference type="GO" id="GO:0003723">
    <property type="term" value="F:RNA binding"/>
    <property type="evidence" value="ECO:0007669"/>
    <property type="project" value="UniProtKB-KW"/>
</dbReference>
<dbReference type="GO" id="GO:0004831">
    <property type="term" value="F:tyrosine-tRNA ligase activity"/>
    <property type="evidence" value="ECO:0007669"/>
    <property type="project" value="UniProtKB-UniRule"/>
</dbReference>
<dbReference type="GO" id="GO:0006437">
    <property type="term" value="P:tyrosyl-tRNA aminoacylation"/>
    <property type="evidence" value="ECO:0007669"/>
    <property type="project" value="UniProtKB-UniRule"/>
</dbReference>
<dbReference type="CDD" id="cd00165">
    <property type="entry name" value="S4"/>
    <property type="match status" value="1"/>
</dbReference>
<dbReference type="CDD" id="cd00805">
    <property type="entry name" value="TyrRS_core"/>
    <property type="match status" value="1"/>
</dbReference>
<dbReference type="FunFam" id="1.10.240.10:FF:000001">
    <property type="entry name" value="Tyrosine--tRNA ligase"/>
    <property type="match status" value="1"/>
</dbReference>
<dbReference type="Gene3D" id="3.40.50.620">
    <property type="entry name" value="HUPs"/>
    <property type="match status" value="1"/>
</dbReference>
<dbReference type="Gene3D" id="3.10.290.10">
    <property type="entry name" value="RNA-binding S4 domain"/>
    <property type="match status" value="1"/>
</dbReference>
<dbReference type="Gene3D" id="1.10.240.10">
    <property type="entry name" value="Tyrosyl-Transfer RNA Synthetase"/>
    <property type="match status" value="1"/>
</dbReference>
<dbReference type="HAMAP" id="MF_02006">
    <property type="entry name" value="Tyr_tRNA_synth_type1"/>
    <property type="match status" value="1"/>
</dbReference>
<dbReference type="InterPro" id="IPR002305">
    <property type="entry name" value="aa-tRNA-synth_Ic"/>
</dbReference>
<dbReference type="InterPro" id="IPR014729">
    <property type="entry name" value="Rossmann-like_a/b/a_fold"/>
</dbReference>
<dbReference type="InterPro" id="IPR002942">
    <property type="entry name" value="S4_RNA-bd"/>
</dbReference>
<dbReference type="InterPro" id="IPR036986">
    <property type="entry name" value="S4_RNA-bd_sf"/>
</dbReference>
<dbReference type="InterPro" id="IPR054608">
    <property type="entry name" value="SYY-like_C"/>
</dbReference>
<dbReference type="InterPro" id="IPR002307">
    <property type="entry name" value="Tyr-tRNA-ligase"/>
</dbReference>
<dbReference type="InterPro" id="IPR024088">
    <property type="entry name" value="Tyr-tRNA-ligase_bac-type"/>
</dbReference>
<dbReference type="InterPro" id="IPR024107">
    <property type="entry name" value="Tyr-tRNA-ligase_bac_1"/>
</dbReference>
<dbReference type="NCBIfam" id="TIGR00234">
    <property type="entry name" value="tyrS"/>
    <property type="match status" value="1"/>
</dbReference>
<dbReference type="PANTHER" id="PTHR11766:SF0">
    <property type="entry name" value="TYROSINE--TRNA LIGASE, MITOCHONDRIAL"/>
    <property type="match status" value="1"/>
</dbReference>
<dbReference type="PANTHER" id="PTHR11766">
    <property type="entry name" value="TYROSYL-TRNA SYNTHETASE"/>
    <property type="match status" value="1"/>
</dbReference>
<dbReference type="Pfam" id="PF22421">
    <property type="entry name" value="SYY_C-terminal"/>
    <property type="match status" value="1"/>
</dbReference>
<dbReference type="Pfam" id="PF00579">
    <property type="entry name" value="tRNA-synt_1b"/>
    <property type="match status" value="1"/>
</dbReference>
<dbReference type="PRINTS" id="PR01040">
    <property type="entry name" value="TRNASYNTHTYR"/>
</dbReference>
<dbReference type="SMART" id="SM00363">
    <property type="entry name" value="S4"/>
    <property type="match status" value="1"/>
</dbReference>
<dbReference type="SUPFAM" id="SSF55174">
    <property type="entry name" value="Alpha-L RNA-binding motif"/>
    <property type="match status" value="1"/>
</dbReference>
<dbReference type="SUPFAM" id="SSF52374">
    <property type="entry name" value="Nucleotidylyl transferase"/>
    <property type="match status" value="1"/>
</dbReference>
<dbReference type="PROSITE" id="PS50889">
    <property type="entry name" value="S4"/>
    <property type="match status" value="1"/>
</dbReference>
<protein>
    <recommendedName>
        <fullName evidence="1">Tyrosine--tRNA ligase</fullName>
        <ecNumber evidence="1">6.1.1.1</ecNumber>
    </recommendedName>
    <alternativeName>
        <fullName evidence="1">Tyrosyl-tRNA synthetase</fullName>
        <shortName evidence="1">TyrRS</shortName>
    </alternativeName>
</protein>
<comment type="function">
    <text evidence="1">Catalyzes the attachment of tyrosine to tRNA(Tyr) in a two-step reaction: tyrosine is first activated by ATP to form Tyr-AMP and then transferred to the acceptor end of tRNA(Tyr).</text>
</comment>
<comment type="catalytic activity">
    <reaction evidence="1">
        <text>tRNA(Tyr) + L-tyrosine + ATP = L-tyrosyl-tRNA(Tyr) + AMP + diphosphate + H(+)</text>
        <dbReference type="Rhea" id="RHEA:10220"/>
        <dbReference type="Rhea" id="RHEA-COMP:9706"/>
        <dbReference type="Rhea" id="RHEA-COMP:9707"/>
        <dbReference type="ChEBI" id="CHEBI:15378"/>
        <dbReference type="ChEBI" id="CHEBI:30616"/>
        <dbReference type="ChEBI" id="CHEBI:33019"/>
        <dbReference type="ChEBI" id="CHEBI:58315"/>
        <dbReference type="ChEBI" id="CHEBI:78442"/>
        <dbReference type="ChEBI" id="CHEBI:78536"/>
        <dbReference type="ChEBI" id="CHEBI:456215"/>
        <dbReference type="EC" id="6.1.1.1"/>
    </reaction>
</comment>
<comment type="subunit">
    <text evidence="1">Homodimer.</text>
</comment>
<comment type="subcellular location">
    <subcellularLocation>
        <location evidence="1">Cytoplasm</location>
    </subcellularLocation>
</comment>
<comment type="similarity">
    <text evidence="1">Belongs to the class-I aminoacyl-tRNA synthetase family. TyrS type 1 subfamily.</text>
</comment>